<feature type="chain" id="PRO_1000187049" description="3-demethoxyubiquinol 3-hydroxylase">
    <location>
        <begin position="1"/>
        <end position="205"/>
    </location>
</feature>
<feature type="binding site" evidence="1">
    <location>
        <position position="54"/>
    </location>
    <ligand>
        <name>Fe cation</name>
        <dbReference type="ChEBI" id="CHEBI:24875"/>
        <label>1</label>
    </ligand>
</feature>
<feature type="binding site" evidence="1">
    <location>
        <position position="84"/>
    </location>
    <ligand>
        <name>Fe cation</name>
        <dbReference type="ChEBI" id="CHEBI:24875"/>
        <label>1</label>
    </ligand>
</feature>
<feature type="binding site" evidence="1">
    <location>
        <position position="84"/>
    </location>
    <ligand>
        <name>Fe cation</name>
        <dbReference type="ChEBI" id="CHEBI:24875"/>
        <label>2</label>
    </ligand>
</feature>
<feature type="binding site" evidence="1">
    <location>
        <position position="87"/>
    </location>
    <ligand>
        <name>Fe cation</name>
        <dbReference type="ChEBI" id="CHEBI:24875"/>
        <label>1</label>
    </ligand>
</feature>
<feature type="binding site" evidence="1">
    <location>
        <position position="136"/>
    </location>
    <ligand>
        <name>Fe cation</name>
        <dbReference type="ChEBI" id="CHEBI:24875"/>
        <label>2</label>
    </ligand>
</feature>
<feature type="binding site" evidence="1">
    <location>
        <position position="168"/>
    </location>
    <ligand>
        <name>Fe cation</name>
        <dbReference type="ChEBI" id="CHEBI:24875"/>
        <label>1</label>
    </ligand>
</feature>
<feature type="binding site" evidence="1">
    <location>
        <position position="168"/>
    </location>
    <ligand>
        <name>Fe cation</name>
        <dbReference type="ChEBI" id="CHEBI:24875"/>
        <label>2</label>
    </ligand>
</feature>
<feature type="binding site" evidence="1">
    <location>
        <position position="171"/>
    </location>
    <ligand>
        <name>Fe cation</name>
        <dbReference type="ChEBI" id="CHEBI:24875"/>
        <label>2</label>
    </ligand>
</feature>
<dbReference type="EC" id="1.14.99.60" evidence="1"/>
<dbReference type="EMBL" id="CP000884">
    <property type="protein sequence ID" value="ABX38311.1"/>
    <property type="molecule type" value="Genomic_DNA"/>
</dbReference>
<dbReference type="RefSeq" id="WP_012207480.1">
    <property type="nucleotide sequence ID" value="NC_010002.1"/>
</dbReference>
<dbReference type="SMR" id="A9BXN5"/>
<dbReference type="STRING" id="398578.Daci_5683"/>
<dbReference type="GeneID" id="24115942"/>
<dbReference type="KEGG" id="dac:Daci_5683"/>
<dbReference type="eggNOG" id="COG2941">
    <property type="taxonomic scope" value="Bacteria"/>
</dbReference>
<dbReference type="HOGENOM" id="CLU_088601_0_0_4"/>
<dbReference type="UniPathway" id="UPA00232"/>
<dbReference type="Proteomes" id="UP000000784">
    <property type="component" value="Chromosome"/>
</dbReference>
<dbReference type="GO" id="GO:0005886">
    <property type="term" value="C:plasma membrane"/>
    <property type="evidence" value="ECO:0007669"/>
    <property type="project" value="UniProtKB-SubCell"/>
</dbReference>
<dbReference type="GO" id="GO:0008682">
    <property type="term" value="F:3-demethoxyubiquinol 3-hydroxylase activity"/>
    <property type="evidence" value="ECO:0007669"/>
    <property type="project" value="UniProtKB-EC"/>
</dbReference>
<dbReference type="GO" id="GO:0046872">
    <property type="term" value="F:metal ion binding"/>
    <property type="evidence" value="ECO:0007669"/>
    <property type="project" value="UniProtKB-KW"/>
</dbReference>
<dbReference type="GO" id="GO:0006744">
    <property type="term" value="P:ubiquinone biosynthetic process"/>
    <property type="evidence" value="ECO:0007669"/>
    <property type="project" value="UniProtKB-UniRule"/>
</dbReference>
<dbReference type="CDD" id="cd01042">
    <property type="entry name" value="DMQH"/>
    <property type="match status" value="1"/>
</dbReference>
<dbReference type="Gene3D" id="1.20.1260.10">
    <property type="match status" value="1"/>
</dbReference>
<dbReference type="HAMAP" id="MF_01658">
    <property type="entry name" value="COQ7"/>
    <property type="match status" value="1"/>
</dbReference>
<dbReference type="InterPro" id="IPR047809">
    <property type="entry name" value="COQ7_proteobact"/>
</dbReference>
<dbReference type="InterPro" id="IPR012347">
    <property type="entry name" value="Ferritin-like"/>
</dbReference>
<dbReference type="InterPro" id="IPR009078">
    <property type="entry name" value="Ferritin-like_SF"/>
</dbReference>
<dbReference type="InterPro" id="IPR011566">
    <property type="entry name" value="Ubq_synth_Coq7"/>
</dbReference>
<dbReference type="NCBIfam" id="NF033656">
    <property type="entry name" value="DMQ_monoox_COQ7"/>
    <property type="match status" value="1"/>
</dbReference>
<dbReference type="PANTHER" id="PTHR11237:SF4">
    <property type="entry name" value="5-DEMETHOXYUBIQUINONE HYDROXYLASE, MITOCHONDRIAL"/>
    <property type="match status" value="1"/>
</dbReference>
<dbReference type="PANTHER" id="PTHR11237">
    <property type="entry name" value="COENZYME Q10 BIOSYNTHESIS PROTEIN 7"/>
    <property type="match status" value="1"/>
</dbReference>
<dbReference type="Pfam" id="PF03232">
    <property type="entry name" value="COQ7"/>
    <property type="match status" value="1"/>
</dbReference>
<dbReference type="SUPFAM" id="SSF47240">
    <property type="entry name" value="Ferritin-like"/>
    <property type="match status" value="1"/>
</dbReference>
<organism>
    <name type="scientific">Delftia acidovorans (strain DSM 14801 / SPH-1)</name>
    <dbReference type="NCBI Taxonomy" id="398578"/>
    <lineage>
        <taxon>Bacteria</taxon>
        <taxon>Pseudomonadati</taxon>
        <taxon>Pseudomonadota</taxon>
        <taxon>Betaproteobacteria</taxon>
        <taxon>Burkholderiales</taxon>
        <taxon>Comamonadaceae</taxon>
        <taxon>Delftia</taxon>
    </lineage>
</organism>
<evidence type="ECO:0000255" key="1">
    <source>
        <dbReference type="HAMAP-Rule" id="MF_01658"/>
    </source>
</evidence>
<reference key="1">
    <citation type="submission" date="2007-11" db="EMBL/GenBank/DDBJ databases">
        <title>Complete sequence of Delftia acidovorans DSM 14801 / SPH-1.</title>
        <authorList>
            <person name="Copeland A."/>
            <person name="Lucas S."/>
            <person name="Lapidus A."/>
            <person name="Barry K."/>
            <person name="Glavina del Rio T."/>
            <person name="Dalin E."/>
            <person name="Tice H."/>
            <person name="Pitluck S."/>
            <person name="Lowry S."/>
            <person name="Clum A."/>
            <person name="Schmutz J."/>
            <person name="Larimer F."/>
            <person name="Land M."/>
            <person name="Hauser L."/>
            <person name="Kyrpides N."/>
            <person name="Kim E."/>
            <person name="Schleheck D."/>
            <person name="Richardson P."/>
        </authorList>
    </citation>
    <scope>NUCLEOTIDE SEQUENCE [LARGE SCALE GENOMIC DNA]</scope>
    <source>
        <strain>DSM 14801 / SPH-1</strain>
    </source>
</reference>
<comment type="function">
    <text evidence="1">Catalyzes the hydroxylation of 2-nonaprenyl-3-methyl-6-methoxy-1,4-benzoquinol during ubiquinone biosynthesis.</text>
</comment>
<comment type="catalytic activity">
    <reaction evidence="1">
        <text>a 5-methoxy-2-methyl-3-(all-trans-polyprenyl)benzene-1,4-diol + AH2 + O2 = a 3-demethylubiquinol + A + H2O</text>
        <dbReference type="Rhea" id="RHEA:50908"/>
        <dbReference type="Rhea" id="RHEA-COMP:10859"/>
        <dbReference type="Rhea" id="RHEA-COMP:10914"/>
        <dbReference type="ChEBI" id="CHEBI:13193"/>
        <dbReference type="ChEBI" id="CHEBI:15377"/>
        <dbReference type="ChEBI" id="CHEBI:15379"/>
        <dbReference type="ChEBI" id="CHEBI:17499"/>
        <dbReference type="ChEBI" id="CHEBI:84167"/>
        <dbReference type="ChEBI" id="CHEBI:84422"/>
        <dbReference type="EC" id="1.14.99.60"/>
    </reaction>
</comment>
<comment type="cofactor">
    <cofactor evidence="1">
        <name>Fe cation</name>
        <dbReference type="ChEBI" id="CHEBI:24875"/>
    </cofactor>
    <text evidence="1">Binds 2 iron ions per subunit.</text>
</comment>
<comment type="pathway">
    <text evidence="1">Cofactor biosynthesis; ubiquinone biosynthesis.</text>
</comment>
<comment type="subcellular location">
    <subcellularLocation>
        <location evidence="1">Cell membrane</location>
        <topology evidence="1">Peripheral membrane protein</topology>
    </subcellularLocation>
</comment>
<comment type="similarity">
    <text evidence="1">Belongs to the COQ7 family.</text>
</comment>
<sequence>MDKILTAADAALRTLFAQPSAAERSPAAGIAEGELTEAQRRLSGALMRVNHVGEVCAQALYNAQAMVTRDMVLREHLLEAAREETDHLAWTRDRLNALGDRPSLLNPLWFAGAFAIGVVAAKISDAASLGFVVETEEQVSAHLESHLGLLPEEDRASLAVVARMKDDEERHAAAAREAGALQLPPPARALMRLAAKVMTTTAHRI</sequence>
<protein>
    <recommendedName>
        <fullName evidence="1">3-demethoxyubiquinol 3-hydroxylase</fullName>
        <shortName evidence="1">DMQ hydroxylase</shortName>
        <ecNumber evidence="1">1.14.99.60</ecNumber>
    </recommendedName>
    <alternativeName>
        <fullName evidence="1">2-nonaprenyl-3-methyl-6-methoxy-1,4-benzoquinol hydroxylase</fullName>
    </alternativeName>
</protein>
<proteinExistence type="inferred from homology"/>
<keyword id="KW-1003">Cell membrane</keyword>
<keyword id="KW-0408">Iron</keyword>
<keyword id="KW-0472">Membrane</keyword>
<keyword id="KW-0479">Metal-binding</keyword>
<keyword id="KW-0503">Monooxygenase</keyword>
<keyword id="KW-0560">Oxidoreductase</keyword>
<keyword id="KW-1185">Reference proteome</keyword>
<keyword id="KW-0831">Ubiquinone biosynthesis</keyword>
<name>COQ7_DELAS</name>
<gene>
    <name evidence="1" type="primary">coq7</name>
    <name type="ordered locus">Daci_5683</name>
</gene>
<accession>A9BXN5</accession>